<keyword id="KW-0004">4Fe-4S</keyword>
<keyword id="KW-0997">Cell inner membrane</keyword>
<keyword id="KW-1003">Cell membrane</keyword>
<keyword id="KW-0408">Iron</keyword>
<keyword id="KW-0411">Iron-sulfur</keyword>
<keyword id="KW-0472">Membrane</keyword>
<keyword id="KW-0479">Metal-binding</keyword>
<keyword id="KW-0520">NAD</keyword>
<keyword id="KW-0874">Quinone</keyword>
<keyword id="KW-1185">Reference proteome</keyword>
<keyword id="KW-1278">Translocase</keyword>
<keyword id="KW-0813">Transport</keyword>
<keyword id="KW-0830">Ubiquinone</keyword>
<reference key="1">
    <citation type="journal article" date="2004" name="Science">
        <title>Illuminating the evolutionary history of chlamydiae.</title>
        <authorList>
            <person name="Horn M."/>
            <person name="Collingro A."/>
            <person name="Schmitz-Esser S."/>
            <person name="Beier C.L."/>
            <person name="Purkhold U."/>
            <person name="Fartmann B."/>
            <person name="Brandt P."/>
            <person name="Nyakatura G.J."/>
            <person name="Droege M."/>
            <person name="Frishman D."/>
            <person name="Rattei T."/>
            <person name="Mewes H.-W."/>
            <person name="Wagner M."/>
        </authorList>
    </citation>
    <scope>NUCLEOTIDE SEQUENCE [LARGE SCALE GENOMIC DNA]</scope>
    <source>
        <strain>UWE25</strain>
    </source>
</reference>
<organism>
    <name type="scientific">Protochlamydia amoebophila (strain UWE25)</name>
    <dbReference type="NCBI Taxonomy" id="264201"/>
    <lineage>
        <taxon>Bacteria</taxon>
        <taxon>Pseudomonadati</taxon>
        <taxon>Chlamydiota</taxon>
        <taxon>Chlamydiia</taxon>
        <taxon>Parachlamydiales</taxon>
        <taxon>Parachlamydiaceae</taxon>
        <taxon>Candidatus Protochlamydia</taxon>
    </lineage>
</organism>
<evidence type="ECO:0000255" key="1">
    <source>
        <dbReference type="HAMAP-Rule" id="MF_01356"/>
    </source>
</evidence>
<sequence>MGMNHQQEKTPFLIAPLEKLVNWARSNSLWPAQFGLACCAIEMMSTAASRYDLARFGMEVFRASPRQSDVMIVAGRVSQKMAPVLQTIYEQMLEPKWVIAMGDCASCGGVYNNYAIIQGVDKLVPVDVYLAGCPPRPEALIDALIMLQNKIKYGDSSKKGKRHL</sequence>
<name>NUOB_PARUW</name>
<accession>Q6MDR5</accession>
<protein>
    <recommendedName>
        <fullName evidence="1">NADH-quinone oxidoreductase subunit B</fullName>
        <ecNumber evidence="1">7.1.1.-</ecNumber>
    </recommendedName>
    <alternativeName>
        <fullName evidence="1">NADH dehydrogenase I subunit B</fullName>
    </alternativeName>
    <alternativeName>
        <fullName evidence="1">NDH-1 subunit B</fullName>
    </alternativeName>
</protein>
<comment type="function">
    <text evidence="1">NDH-1 shuttles electrons from NADH, via FMN and iron-sulfur (Fe-S) centers, to quinones in the respiratory chain. The immediate electron acceptor for the enzyme in this species is believed to be ubiquinone. Couples the redox reaction to proton translocation (for every two electrons transferred, four hydrogen ions are translocated across the cytoplasmic membrane), and thus conserves the redox energy in a proton gradient.</text>
</comment>
<comment type="catalytic activity">
    <reaction evidence="1">
        <text>a quinone + NADH + 5 H(+)(in) = a quinol + NAD(+) + 4 H(+)(out)</text>
        <dbReference type="Rhea" id="RHEA:57888"/>
        <dbReference type="ChEBI" id="CHEBI:15378"/>
        <dbReference type="ChEBI" id="CHEBI:24646"/>
        <dbReference type="ChEBI" id="CHEBI:57540"/>
        <dbReference type="ChEBI" id="CHEBI:57945"/>
        <dbReference type="ChEBI" id="CHEBI:132124"/>
    </reaction>
</comment>
<comment type="cofactor">
    <cofactor evidence="1">
        <name>[4Fe-4S] cluster</name>
        <dbReference type="ChEBI" id="CHEBI:49883"/>
    </cofactor>
    <text evidence="1">Binds 1 [4Fe-4S] cluster.</text>
</comment>
<comment type="subunit">
    <text evidence="1">NDH-1 is composed of 14 different subunits. Subunits NuoB, C, D, E, F, and G constitute the peripheral sector of the complex.</text>
</comment>
<comment type="subcellular location">
    <subcellularLocation>
        <location evidence="1">Cell inner membrane</location>
        <topology evidence="1">Peripheral membrane protein</topology>
        <orientation evidence="1">Cytoplasmic side</orientation>
    </subcellularLocation>
</comment>
<comment type="similarity">
    <text evidence="1">Belongs to the complex I 20 kDa subunit family.</text>
</comment>
<gene>
    <name evidence="1" type="primary">nuoB</name>
    <name type="ordered locus">pc0560</name>
</gene>
<feature type="chain" id="PRO_0000376307" description="NADH-quinone oxidoreductase subunit B">
    <location>
        <begin position="1"/>
        <end position="164"/>
    </location>
</feature>
<feature type="binding site" evidence="1">
    <location>
        <position position="38"/>
    </location>
    <ligand>
        <name>[4Fe-4S] cluster</name>
        <dbReference type="ChEBI" id="CHEBI:49883"/>
    </ligand>
</feature>
<feature type="binding site" evidence="1">
    <location>
        <position position="39"/>
    </location>
    <ligand>
        <name>[4Fe-4S] cluster</name>
        <dbReference type="ChEBI" id="CHEBI:49883"/>
    </ligand>
</feature>
<feature type="binding site" evidence="1">
    <location>
        <position position="104"/>
    </location>
    <ligand>
        <name>[4Fe-4S] cluster</name>
        <dbReference type="ChEBI" id="CHEBI:49883"/>
    </ligand>
</feature>
<feature type="binding site" evidence="1">
    <location>
        <position position="133"/>
    </location>
    <ligand>
        <name>[4Fe-4S] cluster</name>
        <dbReference type="ChEBI" id="CHEBI:49883"/>
    </ligand>
</feature>
<dbReference type="EC" id="7.1.1.-" evidence="1"/>
<dbReference type="EMBL" id="BX908798">
    <property type="protein sequence ID" value="CAF23284.1"/>
    <property type="molecule type" value="Genomic_DNA"/>
</dbReference>
<dbReference type="SMR" id="Q6MDR5"/>
<dbReference type="STRING" id="264201.pc0560"/>
<dbReference type="KEGG" id="pcu:PC_RS02675"/>
<dbReference type="eggNOG" id="COG0377">
    <property type="taxonomic scope" value="Bacteria"/>
</dbReference>
<dbReference type="HOGENOM" id="CLU_055737_7_3_0"/>
<dbReference type="OrthoDB" id="9786737at2"/>
<dbReference type="Proteomes" id="UP000000529">
    <property type="component" value="Chromosome"/>
</dbReference>
<dbReference type="GO" id="GO:0005886">
    <property type="term" value="C:plasma membrane"/>
    <property type="evidence" value="ECO:0007669"/>
    <property type="project" value="UniProtKB-SubCell"/>
</dbReference>
<dbReference type="GO" id="GO:0045271">
    <property type="term" value="C:respiratory chain complex I"/>
    <property type="evidence" value="ECO:0007669"/>
    <property type="project" value="TreeGrafter"/>
</dbReference>
<dbReference type="GO" id="GO:0051539">
    <property type="term" value="F:4 iron, 4 sulfur cluster binding"/>
    <property type="evidence" value="ECO:0007669"/>
    <property type="project" value="UniProtKB-KW"/>
</dbReference>
<dbReference type="GO" id="GO:0005506">
    <property type="term" value="F:iron ion binding"/>
    <property type="evidence" value="ECO:0007669"/>
    <property type="project" value="UniProtKB-UniRule"/>
</dbReference>
<dbReference type="GO" id="GO:0008137">
    <property type="term" value="F:NADH dehydrogenase (ubiquinone) activity"/>
    <property type="evidence" value="ECO:0007669"/>
    <property type="project" value="InterPro"/>
</dbReference>
<dbReference type="GO" id="GO:0050136">
    <property type="term" value="F:NADH:ubiquinone reductase (non-electrogenic) activity"/>
    <property type="evidence" value="ECO:0007669"/>
    <property type="project" value="UniProtKB-UniRule"/>
</dbReference>
<dbReference type="GO" id="GO:0048038">
    <property type="term" value="F:quinone binding"/>
    <property type="evidence" value="ECO:0007669"/>
    <property type="project" value="UniProtKB-KW"/>
</dbReference>
<dbReference type="GO" id="GO:0009060">
    <property type="term" value="P:aerobic respiration"/>
    <property type="evidence" value="ECO:0007669"/>
    <property type="project" value="TreeGrafter"/>
</dbReference>
<dbReference type="GO" id="GO:0015990">
    <property type="term" value="P:electron transport coupled proton transport"/>
    <property type="evidence" value="ECO:0007669"/>
    <property type="project" value="TreeGrafter"/>
</dbReference>
<dbReference type="FunFam" id="3.40.50.12280:FF:000004">
    <property type="entry name" value="NADH-quinone oxidoreductase subunit B"/>
    <property type="match status" value="1"/>
</dbReference>
<dbReference type="Gene3D" id="3.40.50.12280">
    <property type="match status" value="1"/>
</dbReference>
<dbReference type="HAMAP" id="MF_01356">
    <property type="entry name" value="NDH1_NuoB"/>
    <property type="match status" value="1"/>
</dbReference>
<dbReference type="InterPro" id="IPR006137">
    <property type="entry name" value="NADH_UbQ_OxRdtase-like_20kDa"/>
</dbReference>
<dbReference type="InterPro" id="IPR006138">
    <property type="entry name" value="NADH_UQ_OxRdtase_20Kd_su"/>
</dbReference>
<dbReference type="NCBIfam" id="TIGR01957">
    <property type="entry name" value="nuoB_fam"/>
    <property type="match status" value="1"/>
</dbReference>
<dbReference type="NCBIfam" id="NF005012">
    <property type="entry name" value="PRK06411.1"/>
    <property type="match status" value="1"/>
</dbReference>
<dbReference type="PANTHER" id="PTHR11995">
    <property type="entry name" value="NADH DEHYDROGENASE"/>
    <property type="match status" value="1"/>
</dbReference>
<dbReference type="PANTHER" id="PTHR11995:SF14">
    <property type="entry name" value="NADH DEHYDROGENASE [UBIQUINONE] IRON-SULFUR PROTEIN 7, MITOCHONDRIAL"/>
    <property type="match status" value="1"/>
</dbReference>
<dbReference type="Pfam" id="PF01058">
    <property type="entry name" value="Oxidored_q6"/>
    <property type="match status" value="1"/>
</dbReference>
<dbReference type="SUPFAM" id="SSF56770">
    <property type="entry name" value="HydA/Nqo6-like"/>
    <property type="match status" value="1"/>
</dbReference>
<proteinExistence type="inferred from homology"/>